<feature type="chain" id="PRO_1000046402" description="Phosphopentomutase">
    <location>
        <begin position="1"/>
        <end position="404"/>
    </location>
</feature>
<feature type="binding site" evidence="1">
    <location>
        <position position="10"/>
    </location>
    <ligand>
        <name>Mn(2+)</name>
        <dbReference type="ChEBI" id="CHEBI:29035"/>
        <label>1</label>
    </ligand>
</feature>
<feature type="binding site" evidence="1">
    <location>
        <position position="303"/>
    </location>
    <ligand>
        <name>Mn(2+)</name>
        <dbReference type="ChEBI" id="CHEBI:29035"/>
        <label>2</label>
    </ligand>
</feature>
<feature type="binding site" evidence="1">
    <location>
        <position position="308"/>
    </location>
    <ligand>
        <name>Mn(2+)</name>
        <dbReference type="ChEBI" id="CHEBI:29035"/>
        <label>2</label>
    </ligand>
</feature>
<feature type="binding site" evidence="1">
    <location>
        <position position="344"/>
    </location>
    <ligand>
        <name>Mn(2+)</name>
        <dbReference type="ChEBI" id="CHEBI:29035"/>
        <label>1</label>
    </ligand>
</feature>
<feature type="binding site" evidence="1">
    <location>
        <position position="345"/>
    </location>
    <ligand>
        <name>Mn(2+)</name>
        <dbReference type="ChEBI" id="CHEBI:29035"/>
        <label>1</label>
    </ligand>
</feature>
<feature type="binding site" evidence="1">
    <location>
        <position position="356"/>
    </location>
    <ligand>
        <name>Mn(2+)</name>
        <dbReference type="ChEBI" id="CHEBI:29035"/>
        <label>2</label>
    </ligand>
</feature>
<name>DEOB_SHESR</name>
<evidence type="ECO:0000255" key="1">
    <source>
        <dbReference type="HAMAP-Rule" id="MF_00740"/>
    </source>
</evidence>
<comment type="function">
    <text evidence="1">Isomerase that catalyzes the conversion of deoxy-ribose 1-phosphate (dRib-1-P) and ribose 1-phosphate (Rib-1-P) to deoxy-ribose 5-phosphate (dRib-5-P) and ribose 5-phosphate (Rib-5-P), respectively.</text>
</comment>
<comment type="catalytic activity">
    <reaction evidence="1">
        <text>2-deoxy-alpha-D-ribose 1-phosphate = 2-deoxy-D-ribose 5-phosphate</text>
        <dbReference type="Rhea" id="RHEA:27658"/>
        <dbReference type="ChEBI" id="CHEBI:57259"/>
        <dbReference type="ChEBI" id="CHEBI:62877"/>
        <dbReference type="EC" id="5.4.2.7"/>
    </reaction>
</comment>
<comment type="catalytic activity">
    <reaction evidence="1">
        <text>alpha-D-ribose 1-phosphate = D-ribose 5-phosphate</text>
        <dbReference type="Rhea" id="RHEA:18793"/>
        <dbReference type="ChEBI" id="CHEBI:57720"/>
        <dbReference type="ChEBI" id="CHEBI:78346"/>
        <dbReference type="EC" id="5.4.2.7"/>
    </reaction>
</comment>
<comment type="cofactor">
    <cofactor evidence="1">
        <name>Mn(2+)</name>
        <dbReference type="ChEBI" id="CHEBI:29035"/>
    </cofactor>
    <text evidence="1">Binds 2 manganese ions.</text>
</comment>
<comment type="pathway">
    <text evidence="1">Carbohydrate degradation; 2-deoxy-D-ribose 1-phosphate degradation; D-glyceraldehyde 3-phosphate and acetaldehyde from 2-deoxy-alpha-D-ribose 1-phosphate: step 1/2.</text>
</comment>
<comment type="subcellular location">
    <subcellularLocation>
        <location evidence="1">Cytoplasm</location>
    </subcellularLocation>
</comment>
<comment type="similarity">
    <text evidence="1">Belongs to the phosphopentomutase family.</text>
</comment>
<organism>
    <name type="scientific">Shewanella sp. (strain MR-7)</name>
    <dbReference type="NCBI Taxonomy" id="60481"/>
    <lineage>
        <taxon>Bacteria</taxon>
        <taxon>Pseudomonadati</taxon>
        <taxon>Pseudomonadota</taxon>
        <taxon>Gammaproteobacteria</taxon>
        <taxon>Alteromonadales</taxon>
        <taxon>Shewanellaceae</taxon>
        <taxon>Shewanella</taxon>
    </lineage>
</organism>
<reference key="1">
    <citation type="submission" date="2006-08" db="EMBL/GenBank/DDBJ databases">
        <title>Complete sequence of chromosome 1 of Shewanella sp. MR-7.</title>
        <authorList>
            <person name="Copeland A."/>
            <person name="Lucas S."/>
            <person name="Lapidus A."/>
            <person name="Barry K."/>
            <person name="Detter J.C."/>
            <person name="Glavina del Rio T."/>
            <person name="Hammon N."/>
            <person name="Israni S."/>
            <person name="Dalin E."/>
            <person name="Tice H."/>
            <person name="Pitluck S."/>
            <person name="Kiss H."/>
            <person name="Brettin T."/>
            <person name="Bruce D."/>
            <person name="Han C."/>
            <person name="Tapia R."/>
            <person name="Gilna P."/>
            <person name="Schmutz J."/>
            <person name="Larimer F."/>
            <person name="Land M."/>
            <person name="Hauser L."/>
            <person name="Kyrpides N."/>
            <person name="Mikhailova N."/>
            <person name="Nealson K."/>
            <person name="Konstantinidis K."/>
            <person name="Klappenbach J."/>
            <person name="Tiedje J."/>
            <person name="Richardson P."/>
        </authorList>
    </citation>
    <scope>NUCLEOTIDE SEQUENCE [LARGE SCALE GENOMIC DNA]</scope>
    <source>
        <strain>MR-7</strain>
    </source>
</reference>
<accession>Q0HXQ2</accession>
<gene>
    <name evidence="1" type="primary">deoB</name>
    <name type="ordered locus">Shewmr7_1104</name>
</gene>
<proteinExistence type="inferred from homology"/>
<dbReference type="EC" id="5.4.2.7" evidence="1"/>
<dbReference type="EMBL" id="CP000444">
    <property type="protein sequence ID" value="ABI42103.1"/>
    <property type="molecule type" value="Genomic_DNA"/>
</dbReference>
<dbReference type="SMR" id="Q0HXQ2"/>
<dbReference type="KEGG" id="shm:Shewmr7_1104"/>
<dbReference type="HOGENOM" id="CLU_053861_0_0_6"/>
<dbReference type="UniPathway" id="UPA00002">
    <property type="reaction ID" value="UER00467"/>
</dbReference>
<dbReference type="GO" id="GO:0005829">
    <property type="term" value="C:cytosol"/>
    <property type="evidence" value="ECO:0007669"/>
    <property type="project" value="TreeGrafter"/>
</dbReference>
<dbReference type="GO" id="GO:0000287">
    <property type="term" value="F:magnesium ion binding"/>
    <property type="evidence" value="ECO:0007669"/>
    <property type="project" value="InterPro"/>
</dbReference>
<dbReference type="GO" id="GO:0030145">
    <property type="term" value="F:manganese ion binding"/>
    <property type="evidence" value="ECO:0007669"/>
    <property type="project" value="UniProtKB-UniRule"/>
</dbReference>
<dbReference type="GO" id="GO:0008973">
    <property type="term" value="F:phosphopentomutase activity"/>
    <property type="evidence" value="ECO:0007669"/>
    <property type="project" value="UniProtKB-UniRule"/>
</dbReference>
<dbReference type="GO" id="GO:0006018">
    <property type="term" value="P:2-deoxyribose 1-phosphate catabolic process"/>
    <property type="evidence" value="ECO:0007669"/>
    <property type="project" value="UniProtKB-UniRule"/>
</dbReference>
<dbReference type="GO" id="GO:0006015">
    <property type="term" value="P:5-phosphoribose 1-diphosphate biosynthetic process"/>
    <property type="evidence" value="ECO:0007669"/>
    <property type="project" value="UniProtKB-UniPathway"/>
</dbReference>
<dbReference type="GO" id="GO:0043094">
    <property type="term" value="P:metabolic compound salvage"/>
    <property type="evidence" value="ECO:0007669"/>
    <property type="project" value="InterPro"/>
</dbReference>
<dbReference type="GO" id="GO:0009117">
    <property type="term" value="P:nucleotide metabolic process"/>
    <property type="evidence" value="ECO:0007669"/>
    <property type="project" value="InterPro"/>
</dbReference>
<dbReference type="CDD" id="cd16009">
    <property type="entry name" value="PPM"/>
    <property type="match status" value="1"/>
</dbReference>
<dbReference type="FunFam" id="3.30.70.1250:FF:000001">
    <property type="entry name" value="Phosphopentomutase"/>
    <property type="match status" value="1"/>
</dbReference>
<dbReference type="Gene3D" id="3.40.720.10">
    <property type="entry name" value="Alkaline Phosphatase, subunit A"/>
    <property type="match status" value="1"/>
</dbReference>
<dbReference type="Gene3D" id="3.30.70.1250">
    <property type="entry name" value="Phosphopentomutase"/>
    <property type="match status" value="1"/>
</dbReference>
<dbReference type="HAMAP" id="MF_00740">
    <property type="entry name" value="Phosphopentomut"/>
    <property type="match status" value="1"/>
</dbReference>
<dbReference type="InterPro" id="IPR017850">
    <property type="entry name" value="Alkaline_phosphatase_core_sf"/>
</dbReference>
<dbReference type="InterPro" id="IPR010045">
    <property type="entry name" value="DeoB"/>
</dbReference>
<dbReference type="InterPro" id="IPR006124">
    <property type="entry name" value="Metalloenzyme"/>
</dbReference>
<dbReference type="InterPro" id="IPR024052">
    <property type="entry name" value="Phosphopentomutase_DeoB_cap_sf"/>
</dbReference>
<dbReference type="NCBIfam" id="TIGR01696">
    <property type="entry name" value="deoB"/>
    <property type="match status" value="1"/>
</dbReference>
<dbReference type="NCBIfam" id="NF003766">
    <property type="entry name" value="PRK05362.1"/>
    <property type="match status" value="1"/>
</dbReference>
<dbReference type="PANTHER" id="PTHR21110">
    <property type="entry name" value="PHOSPHOPENTOMUTASE"/>
    <property type="match status" value="1"/>
</dbReference>
<dbReference type="PANTHER" id="PTHR21110:SF0">
    <property type="entry name" value="PHOSPHOPENTOMUTASE"/>
    <property type="match status" value="1"/>
</dbReference>
<dbReference type="Pfam" id="PF01676">
    <property type="entry name" value="Metalloenzyme"/>
    <property type="match status" value="1"/>
</dbReference>
<dbReference type="PIRSF" id="PIRSF001491">
    <property type="entry name" value="Ppentomutase"/>
    <property type="match status" value="1"/>
</dbReference>
<dbReference type="SUPFAM" id="SSF53649">
    <property type="entry name" value="Alkaline phosphatase-like"/>
    <property type="match status" value="1"/>
</dbReference>
<dbReference type="SUPFAM" id="SSF143856">
    <property type="entry name" value="DeoB insert domain-like"/>
    <property type="match status" value="1"/>
</dbReference>
<protein>
    <recommendedName>
        <fullName evidence="1">Phosphopentomutase</fullName>
        <ecNumber evidence="1">5.4.2.7</ecNumber>
    </recommendedName>
    <alternativeName>
        <fullName evidence="1">Phosphodeoxyribomutase</fullName>
    </alternativeName>
</protein>
<keyword id="KW-0963">Cytoplasm</keyword>
<keyword id="KW-0413">Isomerase</keyword>
<keyword id="KW-0464">Manganese</keyword>
<keyword id="KW-0479">Metal-binding</keyword>
<sequence>MKRTVIMMLDSFGVGAAGDAAKFGDLGSDTFGHIAKACAEGKADIGREGPLTLPNLARLGLAHAAMESTGAFAPGFADDVELIGAYGHAQELSSGKDTPSGHWEMAGVPVLFDWGYFSEHQNSFPKELTDKILARAGLDGFLGNCHASGTTILEELGEEHMRSGKPIFYTSADSVFQIACHEGTFGLENLYRLCEIAREELEPYNIGRVIARPFDGTGPNDFARTGNRKDYSLEPPAKTVLDKLKAAGGEVVSVGKIADIYAYCGITKKVKANGLEALFDATLAEVKSAGENTIVFTNFVDFDSHYGHRRDVAGYAKGLEYFDSRLPEMLSLLDEDDLLILTADHGCDPTWQGTDHTREYVPVLAYGAGLKAGSLGRRNSFADIGQSIASYFKLEPMEYGESFI</sequence>